<accession>Q2G9L9</accession>
<proteinExistence type="inferred from homology"/>
<feature type="chain" id="PRO_0000290502" description="1-(5-phosphoribosyl)-5-[(5-phosphoribosylamino)methylideneamino] imidazole-4-carboxamide isomerase">
    <location>
        <begin position="1"/>
        <end position="241"/>
    </location>
</feature>
<feature type="active site" description="Proton acceptor" evidence="1">
    <location>
        <position position="8"/>
    </location>
</feature>
<feature type="active site" description="Proton donor" evidence="1">
    <location>
        <position position="129"/>
    </location>
</feature>
<organism>
    <name type="scientific">Novosphingobium aromaticivorans (strain ATCC 700278 / DSM 12444 / CCUG 56034 / CIP 105152 / NBRC 16084 / F199)</name>
    <dbReference type="NCBI Taxonomy" id="279238"/>
    <lineage>
        <taxon>Bacteria</taxon>
        <taxon>Pseudomonadati</taxon>
        <taxon>Pseudomonadota</taxon>
        <taxon>Alphaproteobacteria</taxon>
        <taxon>Sphingomonadales</taxon>
        <taxon>Sphingomonadaceae</taxon>
        <taxon>Novosphingobium</taxon>
    </lineage>
</organism>
<dbReference type="EC" id="5.3.1.16" evidence="1"/>
<dbReference type="EMBL" id="CP000248">
    <property type="protein sequence ID" value="ABD25454.1"/>
    <property type="molecule type" value="Genomic_DNA"/>
</dbReference>
<dbReference type="RefSeq" id="WP_011444668.1">
    <property type="nucleotide sequence ID" value="NC_007794.1"/>
</dbReference>
<dbReference type="SMR" id="Q2G9L9"/>
<dbReference type="STRING" id="279238.Saro_1009"/>
<dbReference type="KEGG" id="nar:Saro_1009"/>
<dbReference type="eggNOG" id="COG0106">
    <property type="taxonomic scope" value="Bacteria"/>
</dbReference>
<dbReference type="HOGENOM" id="CLU_048577_1_1_5"/>
<dbReference type="UniPathway" id="UPA00031">
    <property type="reaction ID" value="UER00009"/>
</dbReference>
<dbReference type="Proteomes" id="UP000009134">
    <property type="component" value="Chromosome"/>
</dbReference>
<dbReference type="GO" id="GO:0005737">
    <property type="term" value="C:cytoplasm"/>
    <property type="evidence" value="ECO:0007669"/>
    <property type="project" value="UniProtKB-SubCell"/>
</dbReference>
<dbReference type="GO" id="GO:0003949">
    <property type="term" value="F:1-(5-phosphoribosyl)-5-[(5-phosphoribosylamino)methylideneamino]imidazole-4-carboxamide isomerase activity"/>
    <property type="evidence" value="ECO:0007669"/>
    <property type="project" value="UniProtKB-UniRule"/>
</dbReference>
<dbReference type="GO" id="GO:0000105">
    <property type="term" value="P:L-histidine biosynthetic process"/>
    <property type="evidence" value="ECO:0007669"/>
    <property type="project" value="UniProtKB-UniRule"/>
</dbReference>
<dbReference type="GO" id="GO:0000162">
    <property type="term" value="P:L-tryptophan biosynthetic process"/>
    <property type="evidence" value="ECO:0007669"/>
    <property type="project" value="TreeGrafter"/>
</dbReference>
<dbReference type="CDD" id="cd04732">
    <property type="entry name" value="HisA"/>
    <property type="match status" value="1"/>
</dbReference>
<dbReference type="FunFam" id="3.20.20.70:FF:000009">
    <property type="entry name" value="1-(5-phosphoribosyl)-5-[(5-phosphoribosylamino)methylideneamino] imidazole-4-carboxamide isomerase"/>
    <property type="match status" value="1"/>
</dbReference>
<dbReference type="Gene3D" id="3.20.20.70">
    <property type="entry name" value="Aldolase class I"/>
    <property type="match status" value="1"/>
</dbReference>
<dbReference type="HAMAP" id="MF_01014">
    <property type="entry name" value="HisA"/>
    <property type="match status" value="1"/>
</dbReference>
<dbReference type="InterPro" id="IPR013785">
    <property type="entry name" value="Aldolase_TIM"/>
</dbReference>
<dbReference type="InterPro" id="IPR006062">
    <property type="entry name" value="His_biosynth"/>
</dbReference>
<dbReference type="InterPro" id="IPR006063">
    <property type="entry name" value="HisA_bact_arch"/>
</dbReference>
<dbReference type="InterPro" id="IPR044524">
    <property type="entry name" value="Isoase_HisA-like"/>
</dbReference>
<dbReference type="InterPro" id="IPR023016">
    <property type="entry name" value="Isoase_HisA-like_bact"/>
</dbReference>
<dbReference type="InterPro" id="IPR011060">
    <property type="entry name" value="RibuloseP-bd_barrel"/>
</dbReference>
<dbReference type="NCBIfam" id="TIGR00007">
    <property type="entry name" value="1-(5-phosphoribosyl)-5-[(5-phosphoribosylamino)methylideneamino]imidazole-4-carboxamide isomerase"/>
    <property type="match status" value="1"/>
</dbReference>
<dbReference type="NCBIfam" id="NF010112">
    <property type="entry name" value="PRK13585.1"/>
    <property type="match status" value="1"/>
</dbReference>
<dbReference type="PANTHER" id="PTHR43090">
    <property type="entry name" value="1-(5-PHOSPHORIBOSYL)-5-[(5-PHOSPHORIBOSYLAMINO)METHYLIDENEAMINO] IMIDAZOLE-4-CARBOXAMIDE ISOMERASE"/>
    <property type="match status" value="1"/>
</dbReference>
<dbReference type="PANTHER" id="PTHR43090:SF2">
    <property type="entry name" value="1-(5-PHOSPHORIBOSYL)-5-[(5-PHOSPHORIBOSYLAMINO)METHYLIDENEAMINO] IMIDAZOLE-4-CARBOXAMIDE ISOMERASE"/>
    <property type="match status" value="1"/>
</dbReference>
<dbReference type="Pfam" id="PF00977">
    <property type="entry name" value="His_biosynth"/>
    <property type="match status" value="1"/>
</dbReference>
<dbReference type="SUPFAM" id="SSF51366">
    <property type="entry name" value="Ribulose-phoshate binding barrel"/>
    <property type="match status" value="1"/>
</dbReference>
<evidence type="ECO:0000255" key="1">
    <source>
        <dbReference type="HAMAP-Rule" id="MF_01014"/>
    </source>
</evidence>
<gene>
    <name evidence="1" type="primary">hisA</name>
    <name type="ordered locus">Saro_1009</name>
</gene>
<comment type="catalytic activity">
    <reaction evidence="1">
        <text>1-(5-phospho-beta-D-ribosyl)-5-[(5-phospho-beta-D-ribosylamino)methylideneamino]imidazole-4-carboxamide = 5-[(5-phospho-1-deoxy-D-ribulos-1-ylimino)methylamino]-1-(5-phospho-beta-D-ribosyl)imidazole-4-carboxamide</text>
        <dbReference type="Rhea" id="RHEA:15469"/>
        <dbReference type="ChEBI" id="CHEBI:58435"/>
        <dbReference type="ChEBI" id="CHEBI:58525"/>
        <dbReference type="EC" id="5.3.1.16"/>
    </reaction>
</comment>
<comment type="pathway">
    <text evidence="1">Amino-acid biosynthesis; L-histidine biosynthesis; L-histidine from 5-phospho-alpha-D-ribose 1-diphosphate: step 4/9.</text>
</comment>
<comment type="subcellular location">
    <subcellularLocation>
        <location evidence="1">Cytoplasm</location>
    </subcellularLocation>
</comment>
<comment type="similarity">
    <text evidence="1">Belongs to the HisA/HisF family.</text>
</comment>
<name>HIS4_NOVAD</name>
<keyword id="KW-0028">Amino-acid biosynthesis</keyword>
<keyword id="KW-0963">Cytoplasm</keyword>
<keyword id="KW-0368">Histidine biosynthesis</keyword>
<keyword id="KW-0413">Isomerase</keyword>
<keyword id="KW-1185">Reference proteome</keyword>
<sequence length="241" mass="25504">MIVFPAIDLKAGQVVRLAEGDMDRATVYGDNPAHQASLFAQAGSQYLHVVDLDGSFAGRAENREAVEGILKSFPGHVQLGGGIRTREAVSGWFDLGVSRVVMGTAALKDPQFVKDMAKEFPGGIVVAVDARDGMVATEGWADVSDVSVVDLARRFEDAGVASLLFTDIGRDGLLKGVNLDATVELARRVDIPVIASGGVKGIDDIRMLKIHEGDGIEGVITGRALYDGRLDLKAAIEMAEA</sequence>
<protein>
    <recommendedName>
        <fullName evidence="1">1-(5-phosphoribosyl)-5-[(5-phosphoribosylamino)methylideneamino] imidazole-4-carboxamide isomerase</fullName>
        <ecNumber evidence="1">5.3.1.16</ecNumber>
    </recommendedName>
    <alternativeName>
        <fullName evidence="1">Phosphoribosylformimino-5-aminoimidazole carboxamide ribotide isomerase</fullName>
    </alternativeName>
</protein>
<reference key="1">
    <citation type="submission" date="2006-01" db="EMBL/GenBank/DDBJ databases">
        <title>Complete sequence of Novosphingobium aromaticivorans DSM 12444.</title>
        <authorList>
            <consortium name="US DOE Joint Genome Institute"/>
            <person name="Copeland A."/>
            <person name="Lucas S."/>
            <person name="Lapidus A."/>
            <person name="Barry K."/>
            <person name="Detter J.C."/>
            <person name="Glavina T."/>
            <person name="Hammon N."/>
            <person name="Israni S."/>
            <person name="Pitluck S."/>
            <person name="Chain P."/>
            <person name="Malfatti S."/>
            <person name="Shin M."/>
            <person name="Vergez L."/>
            <person name="Schmutz J."/>
            <person name="Larimer F."/>
            <person name="Land M."/>
            <person name="Kyrpides N."/>
            <person name="Ivanova N."/>
            <person name="Fredrickson J."/>
            <person name="Balkwill D."/>
            <person name="Romine M.F."/>
            <person name="Richardson P."/>
        </authorList>
    </citation>
    <scope>NUCLEOTIDE SEQUENCE [LARGE SCALE GENOMIC DNA]</scope>
    <source>
        <strain>ATCC 700278 / DSM 12444 / CCUG 56034 / CIP 105152 / NBRC 16084 / F199</strain>
    </source>
</reference>